<keyword id="KW-0456">Lyase</keyword>
<keyword id="KW-0663">Pyridoxal phosphate</keyword>
<keyword id="KW-1185">Reference proteome</keyword>
<protein>
    <recommendedName>
        <fullName evidence="4">Ethanolamine-phosphate phospho-lyase homolog 1</fullName>
        <ecNumber evidence="3">4.2.3.-</ecNumber>
    </recommendedName>
    <alternativeName>
        <fullName evidence="2">Alanine--glyoxylate aminotransferase 2-like</fullName>
    </alternativeName>
</protein>
<proteinExistence type="inferred from homology"/>
<evidence type="ECO:0000250" key="1"/>
<evidence type="ECO:0000250" key="2">
    <source>
        <dbReference type="UniProtKB" id="Q8TBG4"/>
    </source>
</evidence>
<evidence type="ECO:0000305" key="3"/>
<evidence type="ECO:0000312" key="4">
    <source>
        <dbReference type="WormBase" id="T01B11.2a"/>
    </source>
</evidence>
<comment type="cofactor">
    <cofactor evidence="2">
        <name>pyridoxal 5'-phosphate</name>
        <dbReference type="ChEBI" id="CHEBI:597326"/>
    </cofactor>
</comment>
<comment type="similarity">
    <text evidence="3">Belongs to the class-III pyridoxal-phosphate-dependent aminotransferase family.</text>
</comment>
<comment type="caution">
    <text evidence="2">Does not seem to possess aminotransferase activity.</text>
</comment>
<gene>
    <name evidence="4" type="primary">eppl-1</name>
    <name evidence="4" type="ORF">T01B11.2</name>
</gene>
<dbReference type="EC" id="4.2.3.-" evidence="3"/>
<dbReference type="EMBL" id="BX284604">
    <property type="protein sequence ID" value="CCD65920.1"/>
    <property type="molecule type" value="Genomic_DNA"/>
</dbReference>
<dbReference type="PIR" id="T25848">
    <property type="entry name" value="T25848"/>
</dbReference>
<dbReference type="RefSeq" id="NP_001023346.1">
    <property type="nucleotide sequence ID" value="NM_001028175.7"/>
</dbReference>
<dbReference type="SMR" id="P91408"/>
<dbReference type="BioGRID" id="42758">
    <property type="interactions" value="3"/>
</dbReference>
<dbReference type="DIP" id="DIP-24370N"/>
<dbReference type="FunCoup" id="P91408">
    <property type="interactions" value="613"/>
</dbReference>
<dbReference type="STRING" id="6239.T01B11.2a.1"/>
<dbReference type="PaxDb" id="6239-T01B11.2a.1"/>
<dbReference type="PeptideAtlas" id="P91408"/>
<dbReference type="EnsemblMetazoa" id="T01B11.2a.1">
    <property type="protein sequence ID" value="T01B11.2a.1"/>
    <property type="gene ID" value="WBGene00020139"/>
</dbReference>
<dbReference type="GeneID" id="177646"/>
<dbReference type="KEGG" id="cel:CELE_T01B11.2"/>
<dbReference type="UCSC" id="T01B11.2a.1">
    <property type="organism name" value="c. elegans"/>
</dbReference>
<dbReference type="AGR" id="WB:WBGene00020139"/>
<dbReference type="CTD" id="177646"/>
<dbReference type="WormBase" id="T01B11.2a">
    <property type="protein sequence ID" value="CE12894"/>
    <property type="gene ID" value="WBGene00020139"/>
    <property type="gene designation" value="eppl-1"/>
</dbReference>
<dbReference type="eggNOG" id="KOG1403">
    <property type="taxonomic scope" value="Eukaryota"/>
</dbReference>
<dbReference type="GeneTree" id="ENSGT00940000171040"/>
<dbReference type="HOGENOM" id="CLU_016922_8_0_1"/>
<dbReference type="InParanoid" id="P91408"/>
<dbReference type="OMA" id="GAIETMK"/>
<dbReference type="OrthoDB" id="10261433at2759"/>
<dbReference type="PhylomeDB" id="P91408"/>
<dbReference type="Reactome" id="R-CEL-1442490">
    <property type="pathway name" value="Collagen degradation"/>
</dbReference>
<dbReference type="Reactome" id="R-CEL-1483213">
    <property type="pathway name" value="Synthesis of PE"/>
</dbReference>
<dbReference type="Reactome" id="R-CEL-71064">
    <property type="pathway name" value="Lysine catabolism"/>
</dbReference>
<dbReference type="PRO" id="PR:P91408"/>
<dbReference type="Proteomes" id="UP000001940">
    <property type="component" value="Chromosome IV"/>
</dbReference>
<dbReference type="Bgee" id="WBGene00020139">
    <property type="expression patterns" value="Expressed in larva and 4 other cell types or tissues"/>
</dbReference>
<dbReference type="GO" id="GO:0016829">
    <property type="term" value="F:lyase activity"/>
    <property type="evidence" value="ECO:0007669"/>
    <property type="project" value="UniProtKB-KW"/>
</dbReference>
<dbReference type="GO" id="GO:0030170">
    <property type="term" value="F:pyridoxal phosphate binding"/>
    <property type="evidence" value="ECO:0007669"/>
    <property type="project" value="InterPro"/>
</dbReference>
<dbReference type="GO" id="GO:0008483">
    <property type="term" value="F:transaminase activity"/>
    <property type="evidence" value="ECO:0007669"/>
    <property type="project" value="InterPro"/>
</dbReference>
<dbReference type="CDD" id="cd00610">
    <property type="entry name" value="OAT_like"/>
    <property type="match status" value="1"/>
</dbReference>
<dbReference type="Gene3D" id="3.90.1150.10">
    <property type="entry name" value="Aspartate Aminotransferase, domain 1"/>
    <property type="match status" value="1"/>
</dbReference>
<dbReference type="Gene3D" id="3.40.640.10">
    <property type="entry name" value="Type I PLP-dependent aspartate aminotransferase-like (Major domain)"/>
    <property type="match status" value="1"/>
</dbReference>
<dbReference type="InterPro" id="IPR005814">
    <property type="entry name" value="Aminotrans_3"/>
</dbReference>
<dbReference type="InterPro" id="IPR049704">
    <property type="entry name" value="Aminotrans_3_PPA_site"/>
</dbReference>
<dbReference type="InterPro" id="IPR015424">
    <property type="entry name" value="PyrdxlP-dep_Trfase"/>
</dbReference>
<dbReference type="InterPro" id="IPR015421">
    <property type="entry name" value="PyrdxlP-dep_Trfase_major"/>
</dbReference>
<dbReference type="InterPro" id="IPR015422">
    <property type="entry name" value="PyrdxlP-dep_Trfase_small"/>
</dbReference>
<dbReference type="PANTHER" id="PTHR45688">
    <property type="match status" value="1"/>
</dbReference>
<dbReference type="PANTHER" id="PTHR45688:SF13">
    <property type="entry name" value="ALANINE--GLYOXYLATE AMINOTRANSFERASE 2-LIKE"/>
    <property type="match status" value="1"/>
</dbReference>
<dbReference type="Pfam" id="PF00202">
    <property type="entry name" value="Aminotran_3"/>
    <property type="match status" value="1"/>
</dbReference>
<dbReference type="PIRSF" id="PIRSF000521">
    <property type="entry name" value="Transaminase_4ab_Lys_Orn"/>
    <property type="match status" value="1"/>
</dbReference>
<dbReference type="SUPFAM" id="SSF53383">
    <property type="entry name" value="PLP-dependent transferases"/>
    <property type="match status" value="1"/>
</dbReference>
<dbReference type="PROSITE" id="PS00600">
    <property type="entry name" value="AA_TRANSFER_CLASS_3"/>
    <property type="match status" value="1"/>
</dbReference>
<accession>P91408</accession>
<feature type="chain" id="PRO_0000120541" description="Ethanolamine-phosphate phospho-lyase homolog 1">
    <location>
        <begin position="1"/>
        <end position="467"/>
    </location>
</feature>
<feature type="modified residue" description="N6-(pyridoxal phosphate)lysine" evidence="1">
    <location>
        <position position="307"/>
    </location>
</feature>
<sequence length="467" mass="51645">MSTLVNALGFFTSSTPAAAATKDVRSKEEILKRRKDTIGSKCQIFYSDDPFMVSRASMQYLYDEKSNKFLDCISNVQHVGHCHPKVVEAISKQLATSTCNVRFVSTQLTDCAEQILSTLPGLDTVLFCNSGSEANDLALRLARDYTKHKDAIVIEHAYHGHVTTTMELSPYKFDHGSTVSQPDWVHVAPCPDVFRGKHRLADNELTNEDKLYAAGKQYSDDVKSILNDVESRQCGVAAYFAEALQSCGGQVIPPKDYFKDVATHVRNHGGLMIIDEVQTGFGRIGRKYWAHQLYDDGFLPDIVTMGKPMGNGFPVSAVATRKEIADALGGEVGYFNTYGGNPVACAAVISVMKVVKDENLLEHSQQMGEKLEVALRDLQKKHECIGDIRGVGLFWGIDLVKDRNTREPDQKLAIATILALRKSYGILLNADGPHTNILKIKPPLCFNENNILETVTALDQVLTLMNR</sequence>
<name>AGT2L_CAEEL</name>
<reference key="1">
    <citation type="journal article" date="1998" name="Science">
        <title>Genome sequence of the nematode C. elegans: a platform for investigating biology.</title>
        <authorList>
            <consortium name="The C. elegans sequencing consortium"/>
        </authorList>
    </citation>
    <scope>NUCLEOTIDE SEQUENCE [LARGE SCALE GENOMIC DNA]</scope>
    <source>
        <strain>Bristol N2</strain>
    </source>
</reference>
<organism>
    <name type="scientific">Caenorhabditis elegans</name>
    <dbReference type="NCBI Taxonomy" id="6239"/>
    <lineage>
        <taxon>Eukaryota</taxon>
        <taxon>Metazoa</taxon>
        <taxon>Ecdysozoa</taxon>
        <taxon>Nematoda</taxon>
        <taxon>Chromadorea</taxon>
        <taxon>Rhabditida</taxon>
        <taxon>Rhabditina</taxon>
        <taxon>Rhabditomorpha</taxon>
        <taxon>Rhabditoidea</taxon>
        <taxon>Rhabditidae</taxon>
        <taxon>Peloderinae</taxon>
        <taxon>Caenorhabditis</taxon>
    </lineage>
</organism>